<accession>B1JVS7</accession>
<organism>
    <name type="scientific">Burkholderia orbicola (strain MC0-3)</name>
    <dbReference type="NCBI Taxonomy" id="406425"/>
    <lineage>
        <taxon>Bacteria</taxon>
        <taxon>Pseudomonadati</taxon>
        <taxon>Pseudomonadota</taxon>
        <taxon>Betaproteobacteria</taxon>
        <taxon>Burkholderiales</taxon>
        <taxon>Burkholderiaceae</taxon>
        <taxon>Burkholderia</taxon>
        <taxon>Burkholderia cepacia complex</taxon>
        <taxon>Burkholderia orbicola</taxon>
    </lineage>
</organism>
<sequence>MKTLIRPLVVLFVVLTAVTGLAYPAVMTVFGQAVFPSQANGSLIEQNGKVVGSALIGQSFDAPKYFWGRLSATAPMPYNAAGSGGSNLGPLNPSLADQVKARIAALRDAGTDLSKPVPVDLVTASASGLDPEITPAAAAYQVERVAKARNLTPDAVAQLVAANTAGRQFGVLGEPRVNVLKLNLALDAAQAAH</sequence>
<keyword id="KW-0067">ATP-binding</keyword>
<keyword id="KW-0997">Cell inner membrane</keyword>
<keyword id="KW-1003">Cell membrane</keyword>
<keyword id="KW-0406">Ion transport</keyword>
<keyword id="KW-0472">Membrane</keyword>
<keyword id="KW-0547">Nucleotide-binding</keyword>
<keyword id="KW-0630">Potassium</keyword>
<keyword id="KW-0633">Potassium transport</keyword>
<keyword id="KW-0812">Transmembrane</keyword>
<keyword id="KW-1133">Transmembrane helix</keyword>
<keyword id="KW-0813">Transport</keyword>
<gene>
    <name evidence="1" type="primary">kdpC</name>
    <name type="ordered locus">Bcenmc03_2309</name>
</gene>
<evidence type="ECO:0000255" key="1">
    <source>
        <dbReference type="HAMAP-Rule" id="MF_00276"/>
    </source>
</evidence>
<name>KDPC_BURO0</name>
<dbReference type="EMBL" id="CP000958">
    <property type="protein sequence ID" value="ACA91470.1"/>
    <property type="molecule type" value="Genomic_DNA"/>
</dbReference>
<dbReference type="RefSeq" id="WP_012328922.1">
    <property type="nucleotide sequence ID" value="NC_010508.1"/>
</dbReference>
<dbReference type="SMR" id="B1JVS7"/>
<dbReference type="GeneID" id="83049098"/>
<dbReference type="KEGG" id="bcm:Bcenmc03_2309"/>
<dbReference type="HOGENOM" id="CLU_077094_2_0_4"/>
<dbReference type="Proteomes" id="UP000002169">
    <property type="component" value="Chromosome 1"/>
</dbReference>
<dbReference type="GO" id="GO:0005886">
    <property type="term" value="C:plasma membrane"/>
    <property type="evidence" value="ECO:0007669"/>
    <property type="project" value="UniProtKB-SubCell"/>
</dbReference>
<dbReference type="GO" id="GO:0005524">
    <property type="term" value="F:ATP binding"/>
    <property type="evidence" value="ECO:0007669"/>
    <property type="project" value="UniProtKB-UniRule"/>
</dbReference>
<dbReference type="GO" id="GO:0008556">
    <property type="term" value="F:P-type potassium transmembrane transporter activity"/>
    <property type="evidence" value="ECO:0007669"/>
    <property type="project" value="InterPro"/>
</dbReference>
<dbReference type="HAMAP" id="MF_00276">
    <property type="entry name" value="KdpC"/>
    <property type="match status" value="1"/>
</dbReference>
<dbReference type="InterPro" id="IPR003820">
    <property type="entry name" value="KdpC"/>
</dbReference>
<dbReference type="NCBIfam" id="TIGR00681">
    <property type="entry name" value="kdpC"/>
    <property type="match status" value="1"/>
</dbReference>
<dbReference type="NCBIfam" id="NF001454">
    <property type="entry name" value="PRK00315.1"/>
    <property type="match status" value="1"/>
</dbReference>
<dbReference type="PANTHER" id="PTHR30042">
    <property type="entry name" value="POTASSIUM-TRANSPORTING ATPASE C CHAIN"/>
    <property type="match status" value="1"/>
</dbReference>
<dbReference type="PANTHER" id="PTHR30042:SF2">
    <property type="entry name" value="POTASSIUM-TRANSPORTING ATPASE KDPC SUBUNIT"/>
    <property type="match status" value="1"/>
</dbReference>
<dbReference type="Pfam" id="PF02669">
    <property type="entry name" value="KdpC"/>
    <property type="match status" value="1"/>
</dbReference>
<dbReference type="PIRSF" id="PIRSF001296">
    <property type="entry name" value="K_ATPase_KdpC"/>
    <property type="match status" value="1"/>
</dbReference>
<protein>
    <recommendedName>
        <fullName evidence="1">Potassium-transporting ATPase KdpC subunit</fullName>
    </recommendedName>
    <alternativeName>
        <fullName evidence="1">ATP phosphohydrolase [potassium-transporting] C chain</fullName>
    </alternativeName>
    <alternativeName>
        <fullName evidence="1">Potassium-binding and translocating subunit C</fullName>
    </alternativeName>
    <alternativeName>
        <fullName evidence="1">Potassium-translocating ATPase C chain</fullName>
    </alternativeName>
</protein>
<feature type="chain" id="PRO_1000114714" description="Potassium-transporting ATPase KdpC subunit">
    <location>
        <begin position="1"/>
        <end position="193"/>
    </location>
</feature>
<feature type="transmembrane region" description="Helical" evidence="1">
    <location>
        <begin position="7"/>
        <end position="27"/>
    </location>
</feature>
<proteinExistence type="inferred from homology"/>
<reference key="1">
    <citation type="submission" date="2008-02" db="EMBL/GenBank/DDBJ databases">
        <title>Complete sequence of chromosome 1 of Burkholderia cenocepacia MC0-3.</title>
        <authorList>
            <person name="Copeland A."/>
            <person name="Lucas S."/>
            <person name="Lapidus A."/>
            <person name="Barry K."/>
            <person name="Bruce D."/>
            <person name="Goodwin L."/>
            <person name="Glavina del Rio T."/>
            <person name="Dalin E."/>
            <person name="Tice H."/>
            <person name="Pitluck S."/>
            <person name="Chain P."/>
            <person name="Malfatti S."/>
            <person name="Shin M."/>
            <person name="Vergez L."/>
            <person name="Schmutz J."/>
            <person name="Larimer F."/>
            <person name="Land M."/>
            <person name="Hauser L."/>
            <person name="Kyrpides N."/>
            <person name="Mikhailova N."/>
            <person name="Tiedje J."/>
            <person name="Richardson P."/>
        </authorList>
    </citation>
    <scope>NUCLEOTIDE SEQUENCE [LARGE SCALE GENOMIC DNA]</scope>
    <source>
        <strain>MC0-3</strain>
    </source>
</reference>
<comment type="function">
    <text evidence="1">Part of the high-affinity ATP-driven potassium transport (or Kdp) system, which catalyzes the hydrolysis of ATP coupled with the electrogenic transport of potassium into the cytoplasm. This subunit acts as a catalytic chaperone that increases the ATP-binding affinity of the ATP-hydrolyzing subunit KdpB by the formation of a transient KdpB/KdpC/ATP ternary complex.</text>
</comment>
<comment type="subunit">
    <text evidence="1">The system is composed of three essential subunits: KdpA, KdpB and KdpC.</text>
</comment>
<comment type="subcellular location">
    <subcellularLocation>
        <location evidence="1">Cell inner membrane</location>
        <topology evidence="1">Single-pass membrane protein</topology>
    </subcellularLocation>
</comment>
<comment type="similarity">
    <text evidence="1">Belongs to the KdpC family.</text>
</comment>